<reference key="1">
    <citation type="journal article" date="2000" name="Nature">
        <title>Complete genome sequence of Pseudomonas aeruginosa PAO1, an opportunistic pathogen.</title>
        <authorList>
            <person name="Stover C.K."/>
            <person name="Pham X.-Q.T."/>
            <person name="Erwin A.L."/>
            <person name="Mizoguchi S.D."/>
            <person name="Warrener P."/>
            <person name="Hickey M.J."/>
            <person name="Brinkman F.S.L."/>
            <person name="Hufnagle W.O."/>
            <person name="Kowalik D.J."/>
            <person name="Lagrou M."/>
            <person name="Garber R.L."/>
            <person name="Goltry L."/>
            <person name="Tolentino E."/>
            <person name="Westbrock-Wadman S."/>
            <person name="Yuan Y."/>
            <person name="Brody L.L."/>
            <person name="Coulter S.N."/>
            <person name="Folger K.R."/>
            <person name="Kas A."/>
            <person name="Larbig K."/>
            <person name="Lim R.M."/>
            <person name="Smith K.A."/>
            <person name="Spencer D.H."/>
            <person name="Wong G.K.-S."/>
            <person name="Wu Z."/>
            <person name="Paulsen I.T."/>
            <person name="Reizer J."/>
            <person name="Saier M.H. Jr."/>
            <person name="Hancock R.E.W."/>
            <person name="Lory S."/>
            <person name="Olson M.V."/>
        </authorList>
    </citation>
    <scope>NUCLEOTIDE SEQUENCE [LARGE SCALE GENOMIC DNA]</scope>
    <source>
        <strain>ATCC 15692 / DSM 22644 / CIP 104116 / JCM 14847 / LMG 12228 / 1C / PRS 101 / PAO1</strain>
    </source>
</reference>
<sequence length="181" mass="20236">MSLEQHYSSILTQLGEDVNREGLLDTPKRAAKAMKYLCRGYQQSLEEVVNGALFSSDNSEMVLVKDIELYSLCEHHLLPFIGKAHVAYIPNGKVLGLSKVARIVDMYARRLQIQENMSRQIAEAVQQVTGALGVAVVIQAQHMCMMMRGVEKQNSSMVTSVMLGEFRDNAATRSEFLSLIR</sequence>
<feature type="chain" id="PRO_0000119429" description="GTP cyclohydrolase 1 2">
    <location>
        <begin position="1"/>
        <end position="181"/>
    </location>
</feature>
<dbReference type="EC" id="3.5.4.16"/>
<dbReference type="EMBL" id="AE004091">
    <property type="protein sequence ID" value="AAG05063.1"/>
    <property type="molecule type" value="Genomic_DNA"/>
</dbReference>
<dbReference type="PIR" id="C83435">
    <property type="entry name" value="C83435"/>
</dbReference>
<dbReference type="RefSeq" id="NP_250365.1">
    <property type="nucleotide sequence ID" value="NC_002516.2"/>
</dbReference>
<dbReference type="SMR" id="Q9I351"/>
<dbReference type="FunCoup" id="Q9I351">
    <property type="interactions" value="582"/>
</dbReference>
<dbReference type="STRING" id="208964.PA1674"/>
<dbReference type="PaxDb" id="208964-PA1674"/>
<dbReference type="GeneID" id="879308"/>
<dbReference type="KEGG" id="pae:PA1674"/>
<dbReference type="PATRIC" id="fig|208964.12.peg.1735"/>
<dbReference type="PseudoCAP" id="PA1674"/>
<dbReference type="HOGENOM" id="CLU_049768_3_4_6"/>
<dbReference type="InParanoid" id="Q9I351"/>
<dbReference type="OrthoDB" id="9801207at2"/>
<dbReference type="PhylomeDB" id="Q9I351"/>
<dbReference type="BioCyc" id="PAER208964:G1FZ6-1705-MONOMER"/>
<dbReference type="UniPathway" id="UPA00848">
    <property type="reaction ID" value="UER00151"/>
</dbReference>
<dbReference type="Proteomes" id="UP000002438">
    <property type="component" value="Chromosome"/>
</dbReference>
<dbReference type="GO" id="GO:0005737">
    <property type="term" value="C:cytoplasm"/>
    <property type="evidence" value="ECO:0000318"/>
    <property type="project" value="GO_Central"/>
</dbReference>
<dbReference type="GO" id="GO:0005525">
    <property type="term" value="F:GTP binding"/>
    <property type="evidence" value="ECO:0000318"/>
    <property type="project" value="GO_Central"/>
</dbReference>
<dbReference type="GO" id="GO:0003934">
    <property type="term" value="F:GTP cyclohydrolase I activity"/>
    <property type="evidence" value="ECO:0000318"/>
    <property type="project" value="GO_Central"/>
</dbReference>
<dbReference type="GO" id="GO:0008270">
    <property type="term" value="F:zinc ion binding"/>
    <property type="evidence" value="ECO:0000318"/>
    <property type="project" value="GO_Central"/>
</dbReference>
<dbReference type="GO" id="GO:0006730">
    <property type="term" value="P:one-carbon metabolic process"/>
    <property type="evidence" value="ECO:0007669"/>
    <property type="project" value="UniProtKB-UniRule"/>
</dbReference>
<dbReference type="GO" id="GO:0006729">
    <property type="term" value="P:tetrahydrobiopterin biosynthetic process"/>
    <property type="evidence" value="ECO:0000318"/>
    <property type="project" value="GO_Central"/>
</dbReference>
<dbReference type="GO" id="GO:0046654">
    <property type="term" value="P:tetrahydrofolate biosynthetic process"/>
    <property type="evidence" value="ECO:0007669"/>
    <property type="project" value="UniProtKB-UniRule"/>
</dbReference>
<dbReference type="CDD" id="cd00642">
    <property type="entry name" value="GTP_cyclohydro1"/>
    <property type="match status" value="1"/>
</dbReference>
<dbReference type="FunFam" id="1.10.286.10:FF:000009">
    <property type="entry name" value="GTP cyclohydrolase 1"/>
    <property type="match status" value="1"/>
</dbReference>
<dbReference type="FunFam" id="3.30.1130.10:FF:000001">
    <property type="entry name" value="GTP cyclohydrolase 1"/>
    <property type="match status" value="1"/>
</dbReference>
<dbReference type="Gene3D" id="1.10.286.10">
    <property type="match status" value="1"/>
</dbReference>
<dbReference type="Gene3D" id="3.30.1130.10">
    <property type="match status" value="1"/>
</dbReference>
<dbReference type="HAMAP" id="MF_00223">
    <property type="entry name" value="FolE"/>
    <property type="match status" value="1"/>
</dbReference>
<dbReference type="InterPro" id="IPR043133">
    <property type="entry name" value="GTP-CH-I_C/QueF"/>
</dbReference>
<dbReference type="InterPro" id="IPR043134">
    <property type="entry name" value="GTP-CH-I_N"/>
</dbReference>
<dbReference type="InterPro" id="IPR001474">
    <property type="entry name" value="GTP_CycHdrlase_I"/>
</dbReference>
<dbReference type="InterPro" id="IPR018234">
    <property type="entry name" value="GTP_CycHdrlase_I_CS"/>
</dbReference>
<dbReference type="InterPro" id="IPR020602">
    <property type="entry name" value="GTP_CycHdrlase_I_dom"/>
</dbReference>
<dbReference type="NCBIfam" id="TIGR00063">
    <property type="entry name" value="folE"/>
    <property type="match status" value="1"/>
</dbReference>
<dbReference type="NCBIfam" id="NF006825">
    <property type="entry name" value="PRK09347.1-2"/>
    <property type="match status" value="1"/>
</dbReference>
<dbReference type="NCBIfam" id="NF006826">
    <property type="entry name" value="PRK09347.1-3"/>
    <property type="match status" value="1"/>
</dbReference>
<dbReference type="PANTHER" id="PTHR11109:SF7">
    <property type="entry name" value="GTP CYCLOHYDROLASE 1"/>
    <property type="match status" value="1"/>
</dbReference>
<dbReference type="PANTHER" id="PTHR11109">
    <property type="entry name" value="GTP CYCLOHYDROLASE I"/>
    <property type="match status" value="1"/>
</dbReference>
<dbReference type="Pfam" id="PF01227">
    <property type="entry name" value="GTP_cyclohydroI"/>
    <property type="match status" value="1"/>
</dbReference>
<dbReference type="SUPFAM" id="SSF55620">
    <property type="entry name" value="Tetrahydrobiopterin biosynthesis enzymes-like"/>
    <property type="match status" value="1"/>
</dbReference>
<dbReference type="PROSITE" id="PS00859">
    <property type="entry name" value="GTP_CYCLOHYDROL_1_1"/>
    <property type="match status" value="1"/>
</dbReference>
<dbReference type="PROSITE" id="PS00860">
    <property type="entry name" value="GTP_CYCLOHYDROL_1_2"/>
    <property type="match status" value="1"/>
</dbReference>
<keyword id="KW-0342">GTP-binding</keyword>
<keyword id="KW-0378">Hydrolase</keyword>
<keyword id="KW-0547">Nucleotide-binding</keyword>
<keyword id="KW-0554">One-carbon metabolism</keyword>
<keyword id="KW-1185">Reference proteome</keyword>
<comment type="catalytic activity">
    <reaction>
        <text>GTP + H2O = 7,8-dihydroneopterin 3'-triphosphate + formate + H(+)</text>
        <dbReference type="Rhea" id="RHEA:17473"/>
        <dbReference type="ChEBI" id="CHEBI:15377"/>
        <dbReference type="ChEBI" id="CHEBI:15378"/>
        <dbReference type="ChEBI" id="CHEBI:15740"/>
        <dbReference type="ChEBI" id="CHEBI:37565"/>
        <dbReference type="ChEBI" id="CHEBI:58462"/>
        <dbReference type="EC" id="3.5.4.16"/>
    </reaction>
</comment>
<comment type="pathway">
    <text>Cofactor biosynthesis; 7,8-dihydroneopterin triphosphate biosynthesis; 7,8-dihydroneopterin triphosphate from GTP: step 1/1.</text>
</comment>
<comment type="subunit">
    <text evidence="1">Homomer.</text>
</comment>
<comment type="similarity">
    <text evidence="2">Belongs to the GTP cyclohydrolase I family.</text>
</comment>
<name>GCH12_PSEAE</name>
<accession>Q9I351</accession>
<gene>
    <name type="primary">folE2</name>
    <name type="ordered locus">PA1674</name>
</gene>
<organism>
    <name type="scientific">Pseudomonas aeruginosa (strain ATCC 15692 / DSM 22644 / CIP 104116 / JCM 14847 / LMG 12228 / 1C / PRS 101 / PAO1)</name>
    <dbReference type="NCBI Taxonomy" id="208964"/>
    <lineage>
        <taxon>Bacteria</taxon>
        <taxon>Pseudomonadati</taxon>
        <taxon>Pseudomonadota</taxon>
        <taxon>Gammaproteobacteria</taxon>
        <taxon>Pseudomonadales</taxon>
        <taxon>Pseudomonadaceae</taxon>
        <taxon>Pseudomonas</taxon>
    </lineage>
</organism>
<evidence type="ECO:0000250" key="1"/>
<evidence type="ECO:0000305" key="2"/>
<proteinExistence type="inferred from homology"/>
<protein>
    <recommendedName>
        <fullName>GTP cyclohydrolase 1 2</fullName>
        <ecNumber>3.5.4.16</ecNumber>
    </recommendedName>
    <alternativeName>
        <fullName>GTP cyclohydrolase I 2</fullName>
        <shortName>GTP-CH-I 2</shortName>
    </alternativeName>
</protein>